<gene>
    <name evidence="1" type="primary">rplF</name>
    <name type="ordered locus">str1919</name>
</gene>
<feature type="chain" id="PRO_0000260956" description="Large ribosomal subunit protein uL6">
    <location>
        <begin position="1"/>
        <end position="178"/>
    </location>
</feature>
<dbReference type="EMBL" id="CP000024">
    <property type="protein sequence ID" value="AAV63432.1"/>
    <property type="molecule type" value="Genomic_DNA"/>
</dbReference>
<dbReference type="RefSeq" id="WP_002946167.1">
    <property type="nucleotide sequence ID" value="NC_006449.1"/>
</dbReference>
<dbReference type="SMR" id="Q5LXS6"/>
<dbReference type="GeneID" id="66899647"/>
<dbReference type="KEGG" id="stc:str1919"/>
<dbReference type="HOGENOM" id="CLU_065464_1_2_9"/>
<dbReference type="GO" id="GO:0022625">
    <property type="term" value="C:cytosolic large ribosomal subunit"/>
    <property type="evidence" value="ECO:0007669"/>
    <property type="project" value="TreeGrafter"/>
</dbReference>
<dbReference type="GO" id="GO:0019843">
    <property type="term" value="F:rRNA binding"/>
    <property type="evidence" value="ECO:0007669"/>
    <property type="project" value="UniProtKB-UniRule"/>
</dbReference>
<dbReference type="GO" id="GO:0003735">
    <property type="term" value="F:structural constituent of ribosome"/>
    <property type="evidence" value="ECO:0007669"/>
    <property type="project" value="InterPro"/>
</dbReference>
<dbReference type="GO" id="GO:0002181">
    <property type="term" value="P:cytoplasmic translation"/>
    <property type="evidence" value="ECO:0007669"/>
    <property type="project" value="TreeGrafter"/>
</dbReference>
<dbReference type="FunFam" id="3.90.930.12:FF:000001">
    <property type="entry name" value="50S ribosomal protein L6"/>
    <property type="match status" value="1"/>
</dbReference>
<dbReference type="FunFam" id="3.90.930.12:FF:000002">
    <property type="entry name" value="50S ribosomal protein L6"/>
    <property type="match status" value="1"/>
</dbReference>
<dbReference type="Gene3D" id="3.90.930.12">
    <property type="entry name" value="Ribosomal protein L6, alpha-beta domain"/>
    <property type="match status" value="2"/>
</dbReference>
<dbReference type="HAMAP" id="MF_01365_B">
    <property type="entry name" value="Ribosomal_uL6_B"/>
    <property type="match status" value="1"/>
</dbReference>
<dbReference type="InterPro" id="IPR000702">
    <property type="entry name" value="Ribosomal_uL6-like"/>
</dbReference>
<dbReference type="InterPro" id="IPR036789">
    <property type="entry name" value="Ribosomal_uL6-like_a/b-dom_sf"/>
</dbReference>
<dbReference type="InterPro" id="IPR020040">
    <property type="entry name" value="Ribosomal_uL6_a/b-dom"/>
</dbReference>
<dbReference type="InterPro" id="IPR019906">
    <property type="entry name" value="Ribosomal_uL6_bac-type"/>
</dbReference>
<dbReference type="InterPro" id="IPR002358">
    <property type="entry name" value="Ribosomal_uL6_CS"/>
</dbReference>
<dbReference type="NCBIfam" id="TIGR03654">
    <property type="entry name" value="L6_bact"/>
    <property type="match status" value="1"/>
</dbReference>
<dbReference type="PANTHER" id="PTHR11655">
    <property type="entry name" value="60S/50S RIBOSOMAL PROTEIN L6/L9"/>
    <property type="match status" value="1"/>
</dbReference>
<dbReference type="PANTHER" id="PTHR11655:SF14">
    <property type="entry name" value="LARGE RIBOSOMAL SUBUNIT PROTEIN UL6M"/>
    <property type="match status" value="1"/>
</dbReference>
<dbReference type="Pfam" id="PF00347">
    <property type="entry name" value="Ribosomal_L6"/>
    <property type="match status" value="2"/>
</dbReference>
<dbReference type="PIRSF" id="PIRSF002162">
    <property type="entry name" value="Ribosomal_L6"/>
    <property type="match status" value="1"/>
</dbReference>
<dbReference type="PRINTS" id="PR00059">
    <property type="entry name" value="RIBOSOMALL6"/>
</dbReference>
<dbReference type="SUPFAM" id="SSF56053">
    <property type="entry name" value="Ribosomal protein L6"/>
    <property type="match status" value="2"/>
</dbReference>
<dbReference type="PROSITE" id="PS00525">
    <property type="entry name" value="RIBOSOMAL_L6_1"/>
    <property type="match status" value="1"/>
</dbReference>
<name>RL6_STRT1</name>
<accession>Q5LXS6</accession>
<organism>
    <name type="scientific">Streptococcus thermophilus (strain CNRZ 1066)</name>
    <dbReference type="NCBI Taxonomy" id="299768"/>
    <lineage>
        <taxon>Bacteria</taxon>
        <taxon>Bacillati</taxon>
        <taxon>Bacillota</taxon>
        <taxon>Bacilli</taxon>
        <taxon>Lactobacillales</taxon>
        <taxon>Streptococcaceae</taxon>
        <taxon>Streptococcus</taxon>
    </lineage>
</organism>
<sequence length="178" mass="19458">MSRIGNKVITLPAGVEITNNDNVVTVKGPKGELTREFNKNIEIKVEGNEVTLHRPNDSKENKTIHGTSRANLNNMVVGVSEGFKKELEMHGVGYRAQLQGTKLVLSVGKSHQDEVEAPEGITFEVPSATSIVVSGINKEVVGQTAAYIRSLRSPEPYKGKGIRYVGEYVRRKEGKTGK</sequence>
<evidence type="ECO:0000255" key="1">
    <source>
        <dbReference type="HAMAP-Rule" id="MF_01365"/>
    </source>
</evidence>
<evidence type="ECO:0000305" key="2"/>
<keyword id="KW-0687">Ribonucleoprotein</keyword>
<keyword id="KW-0689">Ribosomal protein</keyword>
<keyword id="KW-0694">RNA-binding</keyword>
<keyword id="KW-0699">rRNA-binding</keyword>
<protein>
    <recommendedName>
        <fullName evidence="1">Large ribosomal subunit protein uL6</fullName>
    </recommendedName>
    <alternativeName>
        <fullName evidence="2">50S ribosomal protein L6</fullName>
    </alternativeName>
</protein>
<comment type="function">
    <text evidence="1">This protein binds to the 23S rRNA, and is important in its secondary structure. It is located near the subunit interface in the base of the L7/L12 stalk, and near the tRNA binding site of the peptidyltransferase center.</text>
</comment>
<comment type="subunit">
    <text evidence="1">Part of the 50S ribosomal subunit.</text>
</comment>
<comment type="similarity">
    <text evidence="1">Belongs to the universal ribosomal protein uL6 family.</text>
</comment>
<reference key="1">
    <citation type="journal article" date="2004" name="Nat. Biotechnol.">
        <title>Complete sequence and comparative genome analysis of the dairy bacterium Streptococcus thermophilus.</title>
        <authorList>
            <person name="Bolotin A."/>
            <person name="Quinquis B."/>
            <person name="Renault P."/>
            <person name="Sorokin A."/>
            <person name="Ehrlich S.D."/>
            <person name="Kulakauskas S."/>
            <person name="Lapidus A."/>
            <person name="Goltsman E."/>
            <person name="Mazur M."/>
            <person name="Pusch G.D."/>
            <person name="Fonstein M."/>
            <person name="Overbeek R."/>
            <person name="Kyprides N."/>
            <person name="Purnelle B."/>
            <person name="Prozzi D."/>
            <person name="Ngui K."/>
            <person name="Masuy D."/>
            <person name="Hancy F."/>
            <person name="Burteau S."/>
            <person name="Boutry M."/>
            <person name="Delcour J."/>
            <person name="Goffeau A."/>
            <person name="Hols P."/>
        </authorList>
    </citation>
    <scope>NUCLEOTIDE SEQUENCE [LARGE SCALE GENOMIC DNA]</scope>
    <source>
        <strain>CNRZ 1066</strain>
    </source>
</reference>
<proteinExistence type="inferred from homology"/>